<name>RS5_RICRS</name>
<gene>
    <name evidence="1" type="primary">rpsE</name>
    <name type="ordered locus">A1G_05470</name>
</gene>
<comment type="function">
    <text evidence="1">With S4 and S12 plays an important role in translational accuracy.</text>
</comment>
<comment type="function">
    <text evidence="1">Located at the back of the 30S subunit body where it stabilizes the conformation of the head with respect to the body.</text>
</comment>
<comment type="subunit">
    <text evidence="1">Part of the 30S ribosomal subunit. Contacts proteins S4 and S8.</text>
</comment>
<comment type="domain">
    <text>The N-terminal domain interacts with the head of the 30S subunit; the C-terminal domain interacts with the body and contacts protein S4. The interaction surface between S4 and S5 is involved in control of translational fidelity.</text>
</comment>
<comment type="similarity">
    <text evidence="1">Belongs to the universal ribosomal protein uS5 family.</text>
</comment>
<organism>
    <name type="scientific">Rickettsia rickettsii (strain Sheila Smith)</name>
    <dbReference type="NCBI Taxonomy" id="392021"/>
    <lineage>
        <taxon>Bacteria</taxon>
        <taxon>Pseudomonadati</taxon>
        <taxon>Pseudomonadota</taxon>
        <taxon>Alphaproteobacteria</taxon>
        <taxon>Rickettsiales</taxon>
        <taxon>Rickettsiaceae</taxon>
        <taxon>Rickettsieae</taxon>
        <taxon>Rickettsia</taxon>
        <taxon>spotted fever group</taxon>
    </lineage>
</organism>
<protein>
    <recommendedName>
        <fullName evidence="1">Small ribosomal subunit protein uS5</fullName>
    </recommendedName>
    <alternativeName>
        <fullName evidence="2">30S ribosomal protein S5</fullName>
    </alternativeName>
</protein>
<accession>A8GT52</accession>
<keyword id="KW-0687">Ribonucleoprotein</keyword>
<keyword id="KW-0689">Ribosomal protein</keyword>
<keyword id="KW-0694">RNA-binding</keyword>
<keyword id="KW-0699">rRNA-binding</keyword>
<feature type="chain" id="PRO_0000323186" description="Small ribosomal subunit protein uS5">
    <location>
        <begin position="1"/>
        <end position="176"/>
    </location>
</feature>
<feature type="domain" description="S5 DRBM" evidence="1">
    <location>
        <begin position="11"/>
        <end position="74"/>
    </location>
</feature>
<reference key="1">
    <citation type="submission" date="2007-09" db="EMBL/GenBank/DDBJ databases">
        <title>Complete genome sequence of Rickettsia rickettsii.</title>
        <authorList>
            <person name="Madan A."/>
            <person name="Fahey J."/>
            <person name="Helton E."/>
            <person name="Ketteman M."/>
            <person name="Madan A."/>
            <person name="Rodrigues S."/>
            <person name="Sanchez A."/>
            <person name="Dasch G."/>
            <person name="Eremeeva M."/>
        </authorList>
    </citation>
    <scope>NUCLEOTIDE SEQUENCE [LARGE SCALE GENOMIC DNA]</scope>
    <source>
        <strain>Sheila Smith</strain>
    </source>
</reference>
<sequence length="176" mass="18778">MSKVKKNDETLSEVLVDVNRVTKVVKGGRSFAFSAYVVVGDKAGRVGAGHGKAKEVNEARGKAKQAAKKRMMKVPLYQNRTIHHDVVGKSGAAKVILRRAKAGTGVIAGGSMRAIFDSLGIHDVVAKSIGSTNVYAMISATFDALNKLASPKSIAMRRDKKVNEISVKSADIQVNE</sequence>
<evidence type="ECO:0000255" key="1">
    <source>
        <dbReference type="HAMAP-Rule" id="MF_01307"/>
    </source>
</evidence>
<evidence type="ECO:0000305" key="2"/>
<dbReference type="EMBL" id="CP000848">
    <property type="protein sequence ID" value="ABV76577.1"/>
    <property type="molecule type" value="Genomic_DNA"/>
</dbReference>
<dbReference type="RefSeq" id="WP_012151140.1">
    <property type="nucleotide sequence ID" value="NZ_CP121767.1"/>
</dbReference>
<dbReference type="SMR" id="A8GT52"/>
<dbReference type="GeneID" id="79937653"/>
<dbReference type="KEGG" id="rri:A1G_05470"/>
<dbReference type="HOGENOM" id="CLU_065898_2_2_5"/>
<dbReference type="Proteomes" id="UP000006832">
    <property type="component" value="Chromosome"/>
</dbReference>
<dbReference type="GO" id="GO:0015935">
    <property type="term" value="C:small ribosomal subunit"/>
    <property type="evidence" value="ECO:0007669"/>
    <property type="project" value="InterPro"/>
</dbReference>
<dbReference type="GO" id="GO:0019843">
    <property type="term" value="F:rRNA binding"/>
    <property type="evidence" value="ECO:0007669"/>
    <property type="project" value="UniProtKB-UniRule"/>
</dbReference>
<dbReference type="GO" id="GO:0003735">
    <property type="term" value="F:structural constituent of ribosome"/>
    <property type="evidence" value="ECO:0007669"/>
    <property type="project" value="InterPro"/>
</dbReference>
<dbReference type="GO" id="GO:0006412">
    <property type="term" value="P:translation"/>
    <property type="evidence" value="ECO:0007669"/>
    <property type="project" value="UniProtKB-UniRule"/>
</dbReference>
<dbReference type="FunFam" id="3.30.230.10:FF:000002">
    <property type="entry name" value="30S ribosomal protein S5"/>
    <property type="match status" value="1"/>
</dbReference>
<dbReference type="Gene3D" id="3.30.160.20">
    <property type="match status" value="1"/>
</dbReference>
<dbReference type="Gene3D" id="3.30.230.10">
    <property type="match status" value="1"/>
</dbReference>
<dbReference type="HAMAP" id="MF_01307_B">
    <property type="entry name" value="Ribosomal_uS5_B"/>
    <property type="match status" value="1"/>
</dbReference>
<dbReference type="InterPro" id="IPR020568">
    <property type="entry name" value="Ribosomal_Su5_D2-typ_SF"/>
</dbReference>
<dbReference type="InterPro" id="IPR000851">
    <property type="entry name" value="Ribosomal_uS5"/>
</dbReference>
<dbReference type="InterPro" id="IPR005712">
    <property type="entry name" value="Ribosomal_uS5_bac-type"/>
</dbReference>
<dbReference type="InterPro" id="IPR005324">
    <property type="entry name" value="Ribosomal_uS5_C"/>
</dbReference>
<dbReference type="InterPro" id="IPR013810">
    <property type="entry name" value="Ribosomal_uS5_N"/>
</dbReference>
<dbReference type="InterPro" id="IPR018192">
    <property type="entry name" value="Ribosomal_uS5_N_CS"/>
</dbReference>
<dbReference type="InterPro" id="IPR014721">
    <property type="entry name" value="Ribsml_uS5_D2-typ_fold_subgr"/>
</dbReference>
<dbReference type="NCBIfam" id="TIGR01021">
    <property type="entry name" value="rpsE_bact"/>
    <property type="match status" value="1"/>
</dbReference>
<dbReference type="PANTHER" id="PTHR48277">
    <property type="entry name" value="MITOCHONDRIAL RIBOSOMAL PROTEIN S5"/>
    <property type="match status" value="1"/>
</dbReference>
<dbReference type="PANTHER" id="PTHR48277:SF1">
    <property type="entry name" value="MITOCHONDRIAL RIBOSOMAL PROTEIN S5"/>
    <property type="match status" value="1"/>
</dbReference>
<dbReference type="Pfam" id="PF00333">
    <property type="entry name" value="Ribosomal_S5"/>
    <property type="match status" value="1"/>
</dbReference>
<dbReference type="Pfam" id="PF03719">
    <property type="entry name" value="Ribosomal_S5_C"/>
    <property type="match status" value="1"/>
</dbReference>
<dbReference type="SUPFAM" id="SSF54768">
    <property type="entry name" value="dsRNA-binding domain-like"/>
    <property type="match status" value="1"/>
</dbReference>
<dbReference type="SUPFAM" id="SSF54211">
    <property type="entry name" value="Ribosomal protein S5 domain 2-like"/>
    <property type="match status" value="1"/>
</dbReference>
<dbReference type="PROSITE" id="PS00585">
    <property type="entry name" value="RIBOSOMAL_S5"/>
    <property type="match status" value="1"/>
</dbReference>
<dbReference type="PROSITE" id="PS50881">
    <property type="entry name" value="S5_DSRBD"/>
    <property type="match status" value="1"/>
</dbReference>
<proteinExistence type="inferred from homology"/>